<keyword id="KW-0472">Membrane</keyword>
<keyword id="KW-0479">Metal-binding</keyword>
<keyword id="KW-1185">Reference proteome</keyword>
<keyword id="KW-0677">Repeat</keyword>
<keyword id="KW-0808">Transferase</keyword>
<keyword id="KW-0812">Transmembrane</keyword>
<keyword id="KW-1133">Transmembrane helix</keyword>
<keyword id="KW-0833">Ubl conjugation pathway</keyword>
<keyword id="KW-0862">Zinc</keyword>
<keyword id="KW-0863">Zinc-finger</keyword>
<name>R144A_XENTR</name>
<dbReference type="EC" id="2.3.2.31" evidence="2"/>
<dbReference type="EMBL" id="BC136198">
    <property type="protein sequence ID" value="AAI36199.1"/>
    <property type="molecule type" value="mRNA"/>
</dbReference>
<dbReference type="RefSeq" id="NP_001095278.1">
    <property type="nucleotide sequence ID" value="NM_001101808.1"/>
</dbReference>
<dbReference type="SMR" id="A4IIY1"/>
<dbReference type="FunCoup" id="A4IIY1">
    <property type="interactions" value="452"/>
</dbReference>
<dbReference type="STRING" id="8364.ENSXETP00000017903"/>
<dbReference type="PaxDb" id="8364-ENSXETP00000050608"/>
<dbReference type="DNASU" id="100124307"/>
<dbReference type="GeneID" id="100124307"/>
<dbReference type="KEGG" id="xtr:100124307"/>
<dbReference type="AGR" id="Xenbase:XB-GENE-962808"/>
<dbReference type="CTD" id="9781"/>
<dbReference type="Xenbase" id="XB-GENE-962808">
    <property type="gene designation" value="rnf144a"/>
</dbReference>
<dbReference type="eggNOG" id="KOG1815">
    <property type="taxonomic scope" value="Eukaryota"/>
</dbReference>
<dbReference type="InParanoid" id="A4IIY1"/>
<dbReference type="OMA" id="CMVAAEM"/>
<dbReference type="OrthoDB" id="10009520at2759"/>
<dbReference type="UniPathway" id="UPA00143"/>
<dbReference type="Proteomes" id="UP000008143">
    <property type="component" value="Chromosome 5"/>
</dbReference>
<dbReference type="GO" id="GO:0016020">
    <property type="term" value="C:membrane"/>
    <property type="evidence" value="ECO:0007669"/>
    <property type="project" value="UniProtKB-SubCell"/>
</dbReference>
<dbReference type="GO" id="GO:0004842">
    <property type="term" value="F:ubiquitin-protein transferase activity"/>
    <property type="evidence" value="ECO:0007669"/>
    <property type="project" value="InterPro"/>
</dbReference>
<dbReference type="GO" id="GO:0008270">
    <property type="term" value="F:zinc ion binding"/>
    <property type="evidence" value="ECO:0007669"/>
    <property type="project" value="UniProtKB-KW"/>
</dbReference>
<dbReference type="GO" id="GO:0016567">
    <property type="term" value="P:protein ubiquitination"/>
    <property type="evidence" value="ECO:0007669"/>
    <property type="project" value="UniProtKB-UniPathway"/>
</dbReference>
<dbReference type="CDD" id="cd20366">
    <property type="entry name" value="BRcat_RBR_RNF144A"/>
    <property type="match status" value="1"/>
</dbReference>
<dbReference type="CDD" id="cd16777">
    <property type="entry name" value="mRING-HC-C4C4_RBR_RNF144A"/>
    <property type="match status" value="1"/>
</dbReference>
<dbReference type="CDD" id="cd20352">
    <property type="entry name" value="Rcat_RBR_RNF144"/>
    <property type="match status" value="1"/>
</dbReference>
<dbReference type="FunFam" id="1.20.120.1750:FF:000006">
    <property type="entry name" value="RBR-type E3 ubiquitin transferase"/>
    <property type="match status" value="1"/>
</dbReference>
<dbReference type="FunFam" id="3.30.40.10:FF:000051">
    <property type="entry name" value="RBR-type E3 ubiquitin transferase"/>
    <property type="match status" value="1"/>
</dbReference>
<dbReference type="Gene3D" id="1.20.120.1750">
    <property type="match status" value="1"/>
</dbReference>
<dbReference type="Gene3D" id="3.30.40.10">
    <property type="entry name" value="Zinc/RING finger domain, C3HC4 (zinc finger)"/>
    <property type="match status" value="1"/>
</dbReference>
<dbReference type="InterPro" id="IPR031127">
    <property type="entry name" value="E3_UB_ligase_RBR"/>
</dbReference>
<dbReference type="InterPro" id="IPR002867">
    <property type="entry name" value="IBR_dom"/>
</dbReference>
<dbReference type="InterPro" id="IPR044066">
    <property type="entry name" value="TRIAD_supradom"/>
</dbReference>
<dbReference type="InterPro" id="IPR001841">
    <property type="entry name" value="Znf_RING"/>
</dbReference>
<dbReference type="InterPro" id="IPR013083">
    <property type="entry name" value="Znf_RING/FYVE/PHD"/>
</dbReference>
<dbReference type="InterPro" id="IPR017907">
    <property type="entry name" value="Znf_RING_CS"/>
</dbReference>
<dbReference type="PANTHER" id="PTHR11685">
    <property type="entry name" value="RBR FAMILY RING FINGER AND IBR DOMAIN-CONTAINING"/>
    <property type="match status" value="1"/>
</dbReference>
<dbReference type="Pfam" id="PF01485">
    <property type="entry name" value="IBR"/>
    <property type="match status" value="1"/>
</dbReference>
<dbReference type="Pfam" id="PF22191">
    <property type="entry name" value="IBR_1"/>
    <property type="match status" value="1"/>
</dbReference>
<dbReference type="SMART" id="SM00647">
    <property type="entry name" value="IBR"/>
    <property type="match status" value="2"/>
</dbReference>
<dbReference type="SMART" id="SM00184">
    <property type="entry name" value="RING"/>
    <property type="match status" value="2"/>
</dbReference>
<dbReference type="SUPFAM" id="SSF57850">
    <property type="entry name" value="RING/U-box"/>
    <property type="match status" value="3"/>
</dbReference>
<dbReference type="PROSITE" id="PS51873">
    <property type="entry name" value="TRIAD"/>
    <property type="match status" value="1"/>
</dbReference>
<dbReference type="PROSITE" id="PS00518">
    <property type="entry name" value="ZF_RING_1"/>
    <property type="match status" value="1"/>
</dbReference>
<dbReference type="PROSITE" id="PS50089">
    <property type="entry name" value="ZF_RING_2"/>
    <property type="match status" value="1"/>
</dbReference>
<reference key="1">
    <citation type="submission" date="2007-03" db="EMBL/GenBank/DDBJ databases">
        <authorList>
            <consortium name="NIH - Xenopus Gene Collection (XGC) project"/>
        </authorList>
    </citation>
    <scope>NUCLEOTIDE SEQUENCE [LARGE SCALE MRNA]</scope>
    <source>
        <tissue>Brain</tissue>
    </source>
</reference>
<sequence>MTTARYRPTWDLALEPLVSCKLCLGEYTVEQMTTIAQCQCIFCTLCLKQYVELLIKEGLETAISCPDASCPKRGHLQENEIECMVAAEIMQKYKKLQFEKEILLDPCRTWCPSSSCQAVCKLQEKGIQNPQLVQCSACDIEFCSACKANWHPGQGCPENMAITFLPGDSSSFFKSLEDDVPIKRCPKCKVYIERDEGCAQMMCKNCKHAFCWYCLESLDDDFLLIHYDKGPCRNKLGHSRASVIWHRTQVVGIFAGFGLLLLVASPFLLLATPFVLCCKCKCCKGDDDPLPT</sequence>
<proteinExistence type="evidence at transcript level"/>
<accession>A4IIY1</accession>
<protein>
    <recommendedName>
        <fullName>Probable E3 ubiquitin-protein ligase RNF144A</fullName>
        <ecNumber evidence="2">2.3.2.31</ecNumber>
    </recommendedName>
    <alternativeName>
        <fullName>RING finger protein 144A</fullName>
    </alternativeName>
</protein>
<comment type="function">
    <text evidence="1">E3 ubiquitin-protein ligase which accepts ubiquitin from E2 ubiquitin-conjugating enzymes ube2l3 and ube2l6 in the form of a thioester and then directly transfers the ubiquitin to targeted substrates.</text>
</comment>
<comment type="catalytic activity">
    <reaction evidence="2">
        <text>[E2 ubiquitin-conjugating enzyme]-S-ubiquitinyl-L-cysteine + [acceptor protein]-L-lysine = [E2 ubiquitin-conjugating enzyme]-L-cysteine + [acceptor protein]-N(6)-ubiquitinyl-L-lysine.</text>
        <dbReference type="EC" id="2.3.2.31"/>
    </reaction>
</comment>
<comment type="pathway">
    <text>Protein modification; protein ubiquitination.</text>
</comment>
<comment type="subcellular location">
    <subcellularLocation>
        <location evidence="5">Membrane</location>
        <topology evidence="5">Single-pass membrane protein</topology>
    </subcellularLocation>
</comment>
<comment type="domain">
    <text evidence="2">Members of the RBR family are atypical E3 ligases. They interact with the E2 conjugating enzyme UBE2L3 and function like HECT-type E3 enzymes: they bind E2s via the first RING domain, but require an obligate trans-thiolation step during the ubiquitin transfer, requiring a conserved cysteine residue in the second RING domain.</text>
</comment>
<comment type="similarity">
    <text evidence="5">Belongs to the RBR family. RNF144 subfamily.</text>
</comment>
<comment type="caution">
    <text evidence="5">Lacks the His residue in the RING-type domain 2 that is one of the conserved features of the family.</text>
</comment>
<gene>
    <name type="primary">rnf144a</name>
</gene>
<feature type="chain" id="PRO_0000307193" description="Probable E3 ubiquitin-protein ligase RNF144A">
    <location>
        <begin position="1"/>
        <end position="292"/>
    </location>
</feature>
<feature type="transmembrane region" description="Helical" evidence="3">
    <location>
        <begin position="250"/>
        <end position="270"/>
    </location>
</feature>
<feature type="zinc finger region" description="RING-type 1" evidence="4">
    <location>
        <begin position="20"/>
        <end position="70"/>
    </location>
</feature>
<feature type="zinc finger region" description="IBR-type" evidence="4">
    <location>
        <begin position="91"/>
        <end position="156"/>
    </location>
</feature>
<feature type="zinc finger region" description="RING-type 2; atypical" evidence="4">
    <location>
        <begin position="185"/>
        <end position="214"/>
    </location>
</feature>
<feature type="region of interest" description="TRIAD supradomain" evidence="4">
    <location>
        <begin position="16"/>
        <end position="236"/>
    </location>
</feature>
<feature type="active site" evidence="4">
    <location>
        <position position="198"/>
    </location>
</feature>
<feature type="binding site" evidence="4">
    <location>
        <position position="20"/>
    </location>
    <ligand>
        <name>Zn(2+)</name>
        <dbReference type="ChEBI" id="CHEBI:29105"/>
        <label>1</label>
    </ligand>
</feature>
<feature type="binding site" evidence="4">
    <location>
        <position position="23"/>
    </location>
    <ligand>
        <name>Zn(2+)</name>
        <dbReference type="ChEBI" id="CHEBI:29105"/>
        <label>1</label>
    </ligand>
</feature>
<feature type="binding site" evidence="4">
    <location>
        <position position="43"/>
    </location>
    <ligand>
        <name>Zn(2+)</name>
        <dbReference type="ChEBI" id="CHEBI:29105"/>
        <label>1</label>
    </ligand>
</feature>
<feature type="binding site" evidence="4">
    <location>
        <position position="46"/>
    </location>
    <ligand>
        <name>Zn(2+)</name>
        <dbReference type="ChEBI" id="CHEBI:29105"/>
        <label>1</label>
    </ligand>
</feature>
<feature type="binding site" evidence="4">
    <location>
        <position position="111"/>
    </location>
    <ligand>
        <name>Zn(2+)</name>
        <dbReference type="ChEBI" id="CHEBI:29105"/>
        <label>2</label>
    </ligand>
</feature>
<feature type="binding site" evidence="4">
    <location>
        <position position="116"/>
    </location>
    <ligand>
        <name>Zn(2+)</name>
        <dbReference type="ChEBI" id="CHEBI:29105"/>
        <label>2</label>
    </ligand>
</feature>
<feature type="binding site" evidence="4">
    <location>
        <position position="135"/>
    </location>
    <ligand>
        <name>Zn(2+)</name>
        <dbReference type="ChEBI" id="CHEBI:29105"/>
        <label>2</label>
    </ligand>
</feature>
<feature type="binding site" evidence="4">
    <location>
        <position position="138"/>
    </location>
    <ligand>
        <name>Zn(2+)</name>
        <dbReference type="ChEBI" id="CHEBI:29105"/>
        <label>2</label>
    </ligand>
</feature>
<feature type="binding site" evidence="4">
    <location>
        <position position="143"/>
    </location>
    <ligand>
        <name>Zn(2+)</name>
        <dbReference type="ChEBI" id="CHEBI:29105"/>
        <label>3</label>
    </ligand>
</feature>
<feature type="binding site" evidence="4">
    <location>
        <position position="146"/>
    </location>
    <ligand>
        <name>Zn(2+)</name>
        <dbReference type="ChEBI" id="CHEBI:29105"/>
        <label>3</label>
    </ligand>
</feature>
<feature type="binding site" evidence="4">
    <location>
        <position position="151"/>
    </location>
    <ligand>
        <name>Zn(2+)</name>
        <dbReference type="ChEBI" id="CHEBI:29105"/>
        <label>3</label>
    </ligand>
</feature>
<feature type="binding site" evidence="4">
    <location>
        <position position="156"/>
    </location>
    <ligand>
        <name>Zn(2+)</name>
        <dbReference type="ChEBI" id="CHEBI:29105"/>
        <label>3</label>
    </ligand>
</feature>
<feature type="binding site" evidence="4">
    <location>
        <position position="185"/>
    </location>
    <ligand>
        <name>Zn(2+)</name>
        <dbReference type="ChEBI" id="CHEBI:29105"/>
        <label>4</label>
    </ligand>
</feature>
<feature type="binding site" evidence="4">
    <location>
        <position position="188"/>
    </location>
    <ligand>
        <name>Zn(2+)</name>
        <dbReference type="ChEBI" id="CHEBI:29105"/>
        <label>4</label>
    </ligand>
</feature>
<feature type="binding site" evidence="4">
    <location>
        <position position="203"/>
    </location>
    <ligand>
        <name>Zn(2+)</name>
        <dbReference type="ChEBI" id="CHEBI:29105"/>
        <label>4</label>
    </ligand>
</feature>
<feature type="binding site" evidence="4">
    <location>
        <position position="206"/>
    </location>
    <ligand>
        <name>Zn(2+)</name>
        <dbReference type="ChEBI" id="CHEBI:29105"/>
        <label>4</label>
    </ligand>
</feature>
<feature type="binding site" evidence="4">
    <location>
        <position position="211"/>
    </location>
    <ligand>
        <name>Zn(2+)</name>
        <dbReference type="ChEBI" id="CHEBI:29105"/>
        <label>5</label>
    </ligand>
</feature>
<feature type="binding site" evidence="4">
    <location>
        <position position="214"/>
    </location>
    <ligand>
        <name>Zn(2+)</name>
        <dbReference type="ChEBI" id="CHEBI:29105"/>
        <label>5</label>
    </ligand>
</feature>
<feature type="binding site" evidence="4">
    <location>
        <position position="226"/>
    </location>
    <ligand>
        <name>Zn(2+)</name>
        <dbReference type="ChEBI" id="CHEBI:29105"/>
        <label>5</label>
    </ligand>
</feature>
<feature type="binding site" evidence="4">
    <location>
        <position position="232"/>
    </location>
    <ligand>
        <name>Zn(2+)</name>
        <dbReference type="ChEBI" id="CHEBI:29105"/>
        <label>5</label>
    </ligand>
</feature>
<organism>
    <name type="scientific">Xenopus tropicalis</name>
    <name type="common">Western clawed frog</name>
    <name type="synonym">Silurana tropicalis</name>
    <dbReference type="NCBI Taxonomy" id="8364"/>
    <lineage>
        <taxon>Eukaryota</taxon>
        <taxon>Metazoa</taxon>
        <taxon>Chordata</taxon>
        <taxon>Craniata</taxon>
        <taxon>Vertebrata</taxon>
        <taxon>Euteleostomi</taxon>
        <taxon>Amphibia</taxon>
        <taxon>Batrachia</taxon>
        <taxon>Anura</taxon>
        <taxon>Pipoidea</taxon>
        <taxon>Pipidae</taxon>
        <taxon>Xenopodinae</taxon>
        <taxon>Xenopus</taxon>
        <taxon>Silurana</taxon>
    </lineage>
</organism>
<evidence type="ECO:0000250" key="1"/>
<evidence type="ECO:0000250" key="2">
    <source>
        <dbReference type="UniProtKB" id="O60260"/>
    </source>
</evidence>
<evidence type="ECO:0000255" key="3"/>
<evidence type="ECO:0000255" key="4">
    <source>
        <dbReference type="PROSITE-ProRule" id="PRU01221"/>
    </source>
</evidence>
<evidence type="ECO:0000305" key="5"/>